<feature type="chain" id="PRO_1000059064" description="Glycine--tRNA ligase beta subunit">
    <location>
        <begin position="1"/>
        <end position="689"/>
    </location>
</feature>
<reference key="1">
    <citation type="journal article" date="2007" name="PLoS Genet.">
        <title>The complete genome sequence of Yersinia pseudotuberculosis IP31758, the causative agent of Far East scarlet-like fever.</title>
        <authorList>
            <person name="Eppinger M."/>
            <person name="Rosovitz M.J."/>
            <person name="Fricke W.F."/>
            <person name="Rasko D.A."/>
            <person name="Kokorina G."/>
            <person name="Fayolle C."/>
            <person name="Lindler L.E."/>
            <person name="Carniel E."/>
            <person name="Ravel J."/>
        </authorList>
    </citation>
    <scope>NUCLEOTIDE SEQUENCE [LARGE SCALE GENOMIC DNA]</scope>
    <source>
        <strain>IP 31758</strain>
    </source>
</reference>
<proteinExistence type="inferred from homology"/>
<accession>A7FP95</accession>
<keyword id="KW-0030">Aminoacyl-tRNA synthetase</keyword>
<keyword id="KW-0067">ATP-binding</keyword>
<keyword id="KW-0963">Cytoplasm</keyword>
<keyword id="KW-0436">Ligase</keyword>
<keyword id="KW-0547">Nucleotide-binding</keyword>
<keyword id="KW-0648">Protein biosynthesis</keyword>
<name>SYGB_YERP3</name>
<dbReference type="EC" id="6.1.1.14" evidence="1"/>
<dbReference type="EMBL" id="CP000720">
    <property type="protein sequence ID" value="ABS47973.1"/>
    <property type="molecule type" value="Genomic_DNA"/>
</dbReference>
<dbReference type="RefSeq" id="WP_002209623.1">
    <property type="nucleotide sequence ID" value="NC_009708.1"/>
</dbReference>
<dbReference type="SMR" id="A7FP95"/>
<dbReference type="GeneID" id="57974645"/>
<dbReference type="KEGG" id="ypi:YpsIP31758_4130"/>
<dbReference type="HOGENOM" id="CLU_007220_2_2_6"/>
<dbReference type="Proteomes" id="UP000002412">
    <property type="component" value="Chromosome"/>
</dbReference>
<dbReference type="GO" id="GO:0005829">
    <property type="term" value="C:cytosol"/>
    <property type="evidence" value="ECO:0007669"/>
    <property type="project" value="TreeGrafter"/>
</dbReference>
<dbReference type="GO" id="GO:0004814">
    <property type="term" value="F:arginine-tRNA ligase activity"/>
    <property type="evidence" value="ECO:0007669"/>
    <property type="project" value="InterPro"/>
</dbReference>
<dbReference type="GO" id="GO:0005524">
    <property type="term" value="F:ATP binding"/>
    <property type="evidence" value="ECO:0007669"/>
    <property type="project" value="UniProtKB-UniRule"/>
</dbReference>
<dbReference type="GO" id="GO:0004820">
    <property type="term" value="F:glycine-tRNA ligase activity"/>
    <property type="evidence" value="ECO:0007669"/>
    <property type="project" value="UniProtKB-UniRule"/>
</dbReference>
<dbReference type="GO" id="GO:0006420">
    <property type="term" value="P:arginyl-tRNA aminoacylation"/>
    <property type="evidence" value="ECO:0007669"/>
    <property type="project" value="InterPro"/>
</dbReference>
<dbReference type="GO" id="GO:0006426">
    <property type="term" value="P:glycyl-tRNA aminoacylation"/>
    <property type="evidence" value="ECO:0007669"/>
    <property type="project" value="UniProtKB-UniRule"/>
</dbReference>
<dbReference type="HAMAP" id="MF_00255">
    <property type="entry name" value="Gly_tRNA_synth_beta"/>
    <property type="match status" value="1"/>
</dbReference>
<dbReference type="InterPro" id="IPR008909">
    <property type="entry name" value="DALR_anticod-bd"/>
</dbReference>
<dbReference type="InterPro" id="IPR015944">
    <property type="entry name" value="Gly-tRNA-synth_bsu"/>
</dbReference>
<dbReference type="InterPro" id="IPR006194">
    <property type="entry name" value="Gly-tRNA-synth_heterodimer"/>
</dbReference>
<dbReference type="NCBIfam" id="TIGR00211">
    <property type="entry name" value="glyS"/>
    <property type="match status" value="1"/>
</dbReference>
<dbReference type="PANTHER" id="PTHR30075:SF2">
    <property type="entry name" value="GLYCINE--TRNA LIGASE, CHLOROPLASTIC_MITOCHONDRIAL 2"/>
    <property type="match status" value="1"/>
</dbReference>
<dbReference type="PANTHER" id="PTHR30075">
    <property type="entry name" value="GLYCYL-TRNA SYNTHETASE"/>
    <property type="match status" value="1"/>
</dbReference>
<dbReference type="Pfam" id="PF05746">
    <property type="entry name" value="DALR_1"/>
    <property type="match status" value="1"/>
</dbReference>
<dbReference type="Pfam" id="PF02092">
    <property type="entry name" value="tRNA_synt_2f"/>
    <property type="match status" value="1"/>
</dbReference>
<dbReference type="PRINTS" id="PR01045">
    <property type="entry name" value="TRNASYNTHGB"/>
</dbReference>
<dbReference type="SUPFAM" id="SSF109604">
    <property type="entry name" value="HD-domain/PDEase-like"/>
    <property type="match status" value="1"/>
</dbReference>
<dbReference type="PROSITE" id="PS50861">
    <property type="entry name" value="AA_TRNA_LIGASE_II_GLYAB"/>
    <property type="match status" value="1"/>
</dbReference>
<comment type="catalytic activity">
    <reaction evidence="1">
        <text>tRNA(Gly) + glycine + ATP = glycyl-tRNA(Gly) + AMP + diphosphate</text>
        <dbReference type="Rhea" id="RHEA:16013"/>
        <dbReference type="Rhea" id="RHEA-COMP:9664"/>
        <dbReference type="Rhea" id="RHEA-COMP:9683"/>
        <dbReference type="ChEBI" id="CHEBI:30616"/>
        <dbReference type="ChEBI" id="CHEBI:33019"/>
        <dbReference type="ChEBI" id="CHEBI:57305"/>
        <dbReference type="ChEBI" id="CHEBI:78442"/>
        <dbReference type="ChEBI" id="CHEBI:78522"/>
        <dbReference type="ChEBI" id="CHEBI:456215"/>
        <dbReference type="EC" id="6.1.1.14"/>
    </reaction>
</comment>
<comment type="subunit">
    <text evidence="1">Tetramer of two alpha and two beta subunits.</text>
</comment>
<comment type="subcellular location">
    <subcellularLocation>
        <location evidence="1">Cytoplasm</location>
    </subcellularLocation>
</comment>
<comment type="similarity">
    <text evidence="1">Belongs to the class-II aminoacyl-tRNA synthetase family.</text>
</comment>
<sequence length="689" mass="76204">MTQQTFLVEIGTEELPPKALRSLAESFAANFTAELDNANLSHGEVSWYAAPRRLAVKVANLSAAQADREVEKRGPAIAQAFDAEGKPSKAAEGWARGCGITVDQAERLVTDKGEWLLYRAHVKGQPAQLLLAGMVNTALSKLPIPKLMRWGDKETQFVRPVHTVTLLLGTEVIPGTVLGINSDRVIRGHRFMGEAEFTIDSADQYPQILLERGKVIADYELRKSIIKRDAEQAAQQIGGVADLSESLLEEVASLVEWPVVLTAKFEEKFLAVPAEALVYTMKGDQKYFPVYDTAGHLMPHFIFVANIESKDPQQIISGNEKVVRPRLADAEFFFKTDRKKRLEDNLPRLETVLFQQQLGTLRDKTDRIQALAGWVAAQIGADVNHATRAGLLSKCDLMTNMVFEFTDTQGVMGMHYARHDGEAEDVAVALNEQYQPRFAGDDLPSNPVACALAIADKMDTLAGIFGIGQHPKGDKDPFALRRAALGVLRIIVEKNLSLDLQTLTEEAVRLYGSKLTNAKVVDDVIEFMLGRFRAWYQDEGHSVDTIQAVLARRPTKPADFDARVKAVTYFRTLDAAAALAAANKRVSNILAKSTDTLNDHVHASILKEPAELKLATHLVVLRDQLEPVFAAGQYKEALVELAALRETVDEFFESVMVMAEDDAVRVNRLTLLSKLRELFLQVADISLLQ</sequence>
<organism>
    <name type="scientific">Yersinia pseudotuberculosis serotype O:1b (strain IP 31758)</name>
    <dbReference type="NCBI Taxonomy" id="349747"/>
    <lineage>
        <taxon>Bacteria</taxon>
        <taxon>Pseudomonadati</taxon>
        <taxon>Pseudomonadota</taxon>
        <taxon>Gammaproteobacteria</taxon>
        <taxon>Enterobacterales</taxon>
        <taxon>Yersiniaceae</taxon>
        <taxon>Yersinia</taxon>
    </lineage>
</organism>
<evidence type="ECO:0000255" key="1">
    <source>
        <dbReference type="HAMAP-Rule" id="MF_00255"/>
    </source>
</evidence>
<gene>
    <name evidence="1" type="primary">glyS</name>
    <name type="ordered locus">YpsIP31758_4130</name>
</gene>
<protein>
    <recommendedName>
        <fullName evidence="1">Glycine--tRNA ligase beta subunit</fullName>
        <ecNumber evidence="1">6.1.1.14</ecNumber>
    </recommendedName>
    <alternativeName>
        <fullName evidence="1">Glycyl-tRNA synthetase beta subunit</fullName>
        <shortName evidence="1">GlyRS</shortName>
    </alternativeName>
</protein>